<organism>
    <name type="scientific">Diadromus pulchellus idnoreovirus 1</name>
    <name type="common">DpIRV-1</name>
    <dbReference type="NCBI Taxonomy" id="37368"/>
    <lineage>
        <taxon>Viruses</taxon>
        <taxon>Riboviria</taxon>
        <taxon>Orthornavirae</taxon>
        <taxon>Duplornaviricota</taxon>
        <taxon>Resentoviricetes</taxon>
        <taxon>Reovirales</taxon>
        <taxon>Spinareoviridae</taxon>
        <taxon>Idnoreovirus</taxon>
        <taxon>Idnoreovirus 1</taxon>
    </lineage>
</organism>
<sequence>MTSNEITTTSTFSDAIIQQADNPTDINDARIYIQQGNKAKPITFQELLSLYTLNNIDIIFSRNFNLEGILSLITPRGLPKSTAIFARSSRTVVLNTVFRRLTLGTPGWNIEADEFLKAYNGYKQGTYLNINGALVRNSTDGSKPSLQTEYIDDFAALVTTIMQYEFDFDTFEAIQLWLTSKCKDVTLSSGSLVLKSTSERIVTRYTVKTNLNTINLYELGNNKSSEYEPMLKVLAMHMLHSIGRSIGQDTIVSRVPNINMAESVASGESFLSPDSCFRSLILIALLLNDKYVSL</sequence>
<protein>
    <recommendedName>
        <fullName>Uncharacterized protein S10</fullName>
    </recommendedName>
</protein>
<reference key="1">
    <citation type="journal article" date="1995" name="Virology">
        <title>The genome segments of DpRV, a commensal reovirus of the wasp Diadromus pulchellus (Hymenoptera).</title>
        <authorList>
            <person name="Bigot Y."/>
            <person name="Drezen J.M."/>
            <person name="Sizaret P.Y."/>
            <person name="Rabouille A."/>
            <person name="Hamelin M.H."/>
            <person name="Periquet G."/>
        </authorList>
    </citation>
    <scope>NUCLEOTIDE SEQUENCE [GENOMIC RNA]</scope>
</reference>
<accession>Q86282</accession>
<dbReference type="EMBL" id="X82045">
    <property type="protein sequence ID" value="CAA57561.1"/>
    <property type="molecule type" value="Genomic_RNA"/>
</dbReference>
<name>S10_DPIRV</name>
<gene>
    <name type="primary">S10</name>
</gene>
<proteinExistence type="predicted"/>
<organismHost>
    <name type="scientific">Diadromus pulchellus</name>
    <name type="common">Parasitic wasp</name>
    <dbReference type="NCBI Taxonomy" id="7420"/>
</organismHost>
<feature type="chain" id="PRO_0000404253" description="Uncharacterized protein S10">
    <location>
        <begin position="1"/>
        <end position="294"/>
    </location>
</feature>